<dbReference type="EC" id="4.2.1.20" evidence="1"/>
<dbReference type="EMBL" id="CP000703">
    <property type="protein sequence ID" value="ABQ49228.1"/>
    <property type="molecule type" value="Genomic_DNA"/>
</dbReference>
<dbReference type="RefSeq" id="WP_000163628.1">
    <property type="nucleotide sequence ID" value="NC_009487.1"/>
</dbReference>
<dbReference type="SMR" id="A5ISQ5"/>
<dbReference type="KEGG" id="saj:SaurJH9_1434"/>
<dbReference type="HOGENOM" id="CLU_016734_0_0_9"/>
<dbReference type="UniPathway" id="UPA00035">
    <property type="reaction ID" value="UER00044"/>
</dbReference>
<dbReference type="GO" id="GO:0005829">
    <property type="term" value="C:cytosol"/>
    <property type="evidence" value="ECO:0007669"/>
    <property type="project" value="TreeGrafter"/>
</dbReference>
<dbReference type="GO" id="GO:0004834">
    <property type="term" value="F:tryptophan synthase activity"/>
    <property type="evidence" value="ECO:0007669"/>
    <property type="project" value="UniProtKB-UniRule"/>
</dbReference>
<dbReference type="CDD" id="cd04724">
    <property type="entry name" value="Tryptophan_synthase_alpha"/>
    <property type="match status" value="1"/>
</dbReference>
<dbReference type="Gene3D" id="3.20.20.70">
    <property type="entry name" value="Aldolase class I"/>
    <property type="match status" value="1"/>
</dbReference>
<dbReference type="HAMAP" id="MF_00131">
    <property type="entry name" value="Trp_synth_alpha"/>
    <property type="match status" value="1"/>
</dbReference>
<dbReference type="InterPro" id="IPR013785">
    <property type="entry name" value="Aldolase_TIM"/>
</dbReference>
<dbReference type="InterPro" id="IPR011060">
    <property type="entry name" value="RibuloseP-bd_barrel"/>
</dbReference>
<dbReference type="InterPro" id="IPR018204">
    <property type="entry name" value="Trp_synthase_alpha_AS"/>
</dbReference>
<dbReference type="InterPro" id="IPR002028">
    <property type="entry name" value="Trp_synthase_suA"/>
</dbReference>
<dbReference type="NCBIfam" id="TIGR00262">
    <property type="entry name" value="trpA"/>
    <property type="match status" value="1"/>
</dbReference>
<dbReference type="PANTHER" id="PTHR43406:SF1">
    <property type="entry name" value="TRYPTOPHAN SYNTHASE ALPHA CHAIN, CHLOROPLASTIC"/>
    <property type="match status" value="1"/>
</dbReference>
<dbReference type="PANTHER" id="PTHR43406">
    <property type="entry name" value="TRYPTOPHAN SYNTHASE, ALPHA CHAIN"/>
    <property type="match status" value="1"/>
</dbReference>
<dbReference type="Pfam" id="PF00290">
    <property type="entry name" value="Trp_syntA"/>
    <property type="match status" value="1"/>
</dbReference>
<dbReference type="SUPFAM" id="SSF51366">
    <property type="entry name" value="Ribulose-phoshate binding barrel"/>
    <property type="match status" value="1"/>
</dbReference>
<dbReference type="PROSITE" id="PS00167">
    <property type="entry name" value="TRP_SYNTHASE_ALPHA"/>
    <property type="match status" value="1"/>
</dbReference>
<keyword id="KW-0028">Amino-acid biosynthesis</keyword>
<keyword id="KW-0057">Aromatic amino acid biosynthesis</keyword>
<keyword id="KW-0456">Lyase</keyword>
<keyword id="KW-0822">Tryptophan biosynthesis</keyword>
<accession>A5ISQ5</accession>
<reference key="1">
    <citation type="submission" date="2007-05" db="EMBL/GenBank/DDBJ databases">
        <title>Complete sequence of chromosome of Staphylococcus aureus subsp. aureus JH9.</title>
        <authorList>
            <consortium name="US DOE Joint Genome Institute"/>
            <person name="Copeland A."/>
            <person name="Lucas S."/>
            <person name="Lapidus A."/>
            <person name="Barry K."/>
            <person name="Detter J.C."/>
            <person name="Glavina del Rio T."/>
            <person name="Hammon N."/>
            <person name="Israni S."/>
            <person name="Pitluck S."/>
            <person name="Chain P."/>
            <person name="Malfatti S."/>
            <person name="Shin M."/>
            <person name="Vergez L."/>
            <person name="Schmutz J."/>
            <person name="Larimer F."/>
            <person name="Land M."/>
            <person name="Hauser L."/>
            <person name="Kyrpides N."/>
            <person name="Kim E."/>
            <person name="Tomasz A."/>
            <person name="Richardson P."/>
        </authorList>
    </citation>
    <scope>NUCLEOTIDE SEQUENCE [LARGE SCALE GENOMIC DNA]</scope>
    <source>
        <strain>JH9</strain>
    </source>
</reference>
<organism>
    <name type="scientific">Staphylococcus aureus (strain JH9)</name>
    <dbReference type="NCBI Taxonomy" id="359786"/>
    <lineage>
        <taxon>Bacteria</taxon>
        <taxon>Bacillati</taxon>
        <taxon>Bacillota</taxon>
        <taxon>Bacilli</taxon>
        <taxon>Bacillales</taxon>
        <taxon>Staphylococcaceae</taxon>
        <taxon>Staphylococcus</taxon>
    </lineage>
</organism>
<sequence length="242" mass="27145">MTKLFIPYIMGNKDLIENATLLSENGADIIEIGVPFSDPVADGPVIMEAGQQAIKQGITIDYIFNQLEKHGDQIKCNYVLMTYYNIICHYGEQAFFEKCRDTGVYGLIIPDLPYELSQRLKQQFSHYGVKIISLVAMTTDDKRIKDIVSHAEGFIYTVTMNATTGQNGAFHPELKRKIESIKAIANVPVVAGFGIRTPQHVADIKEVADGIVIGSEIVKRFKSNTREEIIRYLQSIQQTLNN</sequence>
<gene>
    <name evidence="1" type="primary">trpA</name>
    <name type="ordered locus">SaurJH9_1434</name>
</gene>
<comment type="function">
    <text evidence="1">The alpha subunit is responsible for the aldol cleavage of indoleglycerol phosphate to indole and glyceraldehyde 3-phosphate.</text>
</comment>
<comment type="catalytic activity">
    <reaction evidence="1">
        <text>(1S,2R)-1-C-(indol-3-yl)glycerol 3-phosphate + L-serine = D-glyceraldehyde 3-phosphate + L-tryptophan + H2O</text>
        <dbReference type="Rhea" id="RHEA:10532"/>
        <dbReference type="ChEBI" id="CHEBI:15377"/>
        <dbReference type="ChEBI" id="CHEBI:33384"/>
        <dbReference type="ChEBI" id="CHEBI:57912"/>
        <dbReference type="ChEBI" id="CHEBI:58866"/>
        <dbReference type="ChEBI" id="CHEBI:59776"/>
        <dbReference type="EC" id="4.2.1.20"/>
    </reaction>
</comment>
<comment type="pathway">
    <text evidence="1">Amino-acid biosynthesis; L-tryptophan biosynthesis; L-tryptophan from chorismate: step 5/5.</text>
</comment>
<comment type="subunit">
    <text evidence="1">Tetramer of two alpha and two beta chains.</text>
</comment>
<comment type="similarity">
    <text evidence="1">Belongs to the TrpA family.</text>
</comment>
<protein>
    <recommendedName>
        <fullName evidence="1">Tryptophan synthase alpha chain</fullName>
        <ecNumber evidence="1">4.2.1.20</ecNumber>
    </recommendedName>
</protein>
<name>TRPA_STAA9</name>
<evidence type="ECO:0000255" key="1">
    <source>
        <dbReference type="HAMAP-Rule" id="MF_00131"/>
    </source>
</evidence>
<proteinExistence type="inferred from homology"/>
<feature type="chain" id="PRO_1000076371" description="Tryptophan synthase alpha chain">
    <location>
        <begin position="1"/>
        <end position="242"/>
    </location>
</feature>
<feature type="active site" description="Proton acceptor" evidence="1">
    <location>
        <position position="31"/>
    </location>
</feature>
<feature type="active site" description="Proton acceptor" evidence="1">
    <location>
        <position position="42"/>
    </location>
</feature>